<accession>C0MAS2</accession>
<gene>
    <name evidence="1" type="primary">ruvA</name>
    <name type="ordered locus">SEQ_2158</name>
</gene>
<protein>
    <recommendedName>
        <fullName evidence="1">Holliday junction branch migration complex subunit RuvA</fullName>
    </recommendedName>
</protein>
<dbReference type="EMBL" id="FM204883">
    <property type="protein sequence ID" value="CAW95524.1"/>
    <property type="molecule type" value="Genomic_DNA"/>
</dbReference>
<dbReference type="RefSeq" id="WP_015898664.1">
    <property type="nucleotide sequence ID" value="NC_012471.1"/>
</dbReference>
<dbReference type="SMR" id="C0MAS2"/>
<dbReference type="KEGG" id="seu:SEQ_2158"/>
<dbReference type="HOGENOM" id="CLU_087936_1_0_9"/>
<dbReference type="OrthoDB" id="5293449at2"/>
<dbReference type="Proteomes" id="UP000001365">
    <property type="component" value="Chromosome"/>
</dbReference>
<dbReference type="GO" id="GO:0005737">
    <property type="term" value="C:cytoplasm"/>
    <property type="evidence" value="ECO:0007669"/>
    <property type="project" value="UniProtKB-SubCell"/>
</dbReference>
<dbReference type="GO" id="GO:0009379">
    <property type="term" value="C:Holliday junction helicase complex"/>
    <property type="evidence" value="ECO:0007669"/>
    <property type="project" value="InterPro"/>
</dbReference>
<dbReference type="GO" id="GO:0048476">
    <property type="term" value="C:Holliday junction resolvase complex"/>
    <property type="evidence" value="ECO:0007669"/>
    <property type="project" value="UniProtKB-UniRule"/>
</dbReference>
<dbReference type="GO" id="GO:0005524">
    <property type="term" value="F:ATP binding"/>
    <property type="evidence" value="ECO:0007669"/>
    <property type="project" value="InterPro"/>
</dbReference>
<dbReference type="GO" id="GO:0000400">
    <property type="term" value="F:four-way junction DNA binding"/>
    <property type="evidence" value="ECO:0007669"/>
    <property type="project" value="UniProtKB-UniRule"/>
</dbReference>
<dbReference type="GO" id="GO:0009378">
    <property type="term" value="F:four-way junction helicase activity"/>
    <property type="evidence" value="ECO:0007669"/>
    <property type="project" value="InterPro"/>
</dbReference>
<dbReference type="GO" id="GO:0006310">
    <property type="term" value="P:DNA recombination"/>
    <property type="evidence" value="ECO:0007669"/>
    <property type="project" value="UniProtKB-UniRule"/>
</dbReference>
<dbReference type="GO" id="GO:0006281">
    <property type="term" value="P:DNA repair"/>
    <property type="evidence" value="ECO:0007669"/>
    <property type="project" value="UniProtKB-UniRule"/>
</dbReference>
<dbReference type="CDD" id="cd14332">
    <property type="entry name" value="UBA_RuvA_C"/>
    <property type="match status" value="1"/>
</dbReference>
<dbReference type="Gene3D" id="1.10.150.20">
    <property type="entry name" value="5' to 3' exonuclease, C-terminal subdomain"/>
    <property type="match status" value="1"/>
</dbReference>
<dbReference type="Gene3D" id="1.10.8.10">
    <property type="entry name" value="DNA helicase RuvA subunit, C-terminal domain"/>
    <property type="match status" value="1"/>
</dbReference>
<dbReference type="Gene3D" id="2.40.50.140">
    <property type="entry name" value="Nucleic acid-binding proteins"/>
    <property type="match status" value="1"/>
</dbReference>
<dbReference type="HAMAP" id="MF_00031">
    <property type="entry name" value="DNA_HJ_migration_RuvA"/>
    <property type="match status" value="1"/>
</dbReference>
<dbReference type="InterPro" id="IPR013849">
    <property type="entry name" value="DNA_helicase_Holl-junc_RuvA_I"/>
</dbReference>
<dbReference type="InterPro" id="IPR003583">
    <property type="entry name" value="Hlx-hairpin-Hlx_DNA-bd_motif"/>
</dbReference>
<dbReference type="InterPro" id="IPR012340">
    <property type="entry name" value="NA-bd_OB-fold"/>
</dbReference>
<dbReference type="InterPro" id="IPR000085">
    <property type="entry name" value="RuvA"/>
</dbReference>
<dbReference type="InterPro" id="IPR010994">
    <property type="entry name" value="RuvA_2-like"/>
</dbReference>
<dbReference type="InterPro" id="IPR011114">
    <property type="entry name" value="RuvA_C"/>
</dbReference>
<dbReference type="InterPro" id="IPR036267">
    <property type="entry name" value="RuvA_C_sf"/>
</dbReference>
<dbReference type="NCBIfam" id="TIGR00084">
    <property type="entry name" value="ruvA"/>
    <property type="match status" value="1"/>
</dbReference>
<dbReference type="Pfam" id="PF14520">
    <property type="entry name" value="HHH_5"/>
    <property type="match status" value="1"/>
</dbReference>
<dbReference type="Pfam" id="PF07499">
    <property type="entry name" value="RuvA_C"/>
    <property type="match status" value="1"/>
</dbReference>
<dbReference type="Pfam" id="PF01330">
    <property type="entry name" value="RuvA_N"/>
    <property type="match status" value="1"/>
</dbReference>
<dbReference type="SMART" id="SM00278">
    <property type="entry name" value="HhH1"/>
    <property type="match status" value="2"/>
</dbReference>
<dbReference type="SUPFAM" id="SSF46929">
    <property type="entry name" value="DNA helicase RuvA subunit, C-terminal domain"/>
    <property type="match status" value="1"/>
</dbReference>
<dbReference type="SUPFAM" id="SSF50249">
    <property type="entry name" value="Nucleic acid-binding proteins"/>
    <property type="match status" value="1"/>
</dbReference>
<dbReference type="SUPFAM" id="SSF47781">
    <property type="entry name" value="RuvA domain 2-like"/>
    <property type="match status" value="1"/>
</dbReference>
<reference key="1">
    <citation type="journal article" date="2009" name="PLoS Pathog.">
        <title>Genomic evidence for the evolution of Streptococcus equi: host restriction, increased virulence, and genetic exchange with human pathogens.</title>
        <authorList>
            <person name="Holden M.T.G."/>
            <person name="Heather Z."/>
            <person name="Paillot R."/>
            <person name="Steward K.F."/>
            <person name="Webb K."/>
            <person name="Ainslie F."/>
            <person name="Jourdan T."/>
            <person name="Bason N.C."/>
            <person name="Holroyd N.E."/>
            <person name="Mungall K."/>
            <person name="Quail M.A."/>
            <person name="Sanders M."/>
            <person name="Simmonds M."/>
            <person name="Willey D."/>
            <person name="Brooks K."/>
            <person name="Aanensen D.M."/>
            <person name="Spratt B.G."/>
            <person name="Jolley K.A."/>
            <person name="Maiden M.C.J."/>
            <person name="Kehoe M."/>
            <person name="Chanter N."/>
            <person name="Bentley S.D."/>
            <person name="Robinson C."/>
            <person name="Maskell D.J."/>
            <person name="Parkhill J."/>
            <person name="Waller A.S."/>
        </authorList>
    </citation>
    <scope>NUCLEOTIDE SEQUENCE [LARGE SCALE GENOMIC DNA]</scope>
    <source>
        <strain>4047</strain>
    </source>
</reference>
<name>RUVA_STRE4</name>
<keyword id="KW-0963">Cytoplasm</keyword>
<keyword id="KW-0227">DNA damage</keyword>
<keyword id="KW-0233">DNA recombination</keyword>
<keyword id="KW-0234">DNA repair</keyword>
<keyword id="KW-0238">DNA-binding</keyword>
<evidence type="ECO:0000255" key="1">
    <source>
        <dbReference type="HAMAP-Rule" id="MF_00031"/>
    </source>
</evidence>
<sequence length="198" mass="21978">MYDYIKGQLTKITAKYIVVEANGLGYMITVANPYSFTDCVNQQVTIYLHQVIREDAQLLFGFHSEEEKDVFLKLISVSGIGPTTALAIVAVDDNRGLVNAIDNSDITYLMRFPKIGKKTAQQMVLDLAGKFVEAPKEESSKPPKAKQQGNEQLDEAVEALLALGYKATELKKIRAFFEGTSETAEQYIKSALKMLMKG</sequence>
<feature type="chain" id="PRO_1000116979" description="Holliday junction branch migration complex subunit RuvA">
    <location>
        <begin position="1"/>
        <end position="198"/>
    </location>
</feature>
<feature type="region of interest" description="Domain I" evidence="1">
    <location>
        <begin position="1"/>
        <end position="63"/>
    </location>
</feature>
<feature type="region of interest" description="Domain II" evidence="1">
    <location>
        <begin position="64"/>
        <end position="142"/>
    </location>
</feature>
<feature type="region of interest" description="Flexible linker" evidence="1">
    <location>
        <begin position="143"/>
        <end position="147"/>
    </location>
</feature>
<feature type="region of interest" description="Domain III" evidence="1">
    <location>
        <begin position="148"/>
        <end position="198"/>
    </location>
</feature>
<organism>
    <name type="scientific">Streptococcus equi subsp. equi (strain 4047)</name>
    <dbReference type="NCBI Taxonomy" id="553482"/>
    <lineage>
        <taxon>Bacteria</taxon>
        <taxon>Bacillati</taxon>
        <taxon>Bacillota</taxon>
        <taxon>Bacilli</taxon>
        <taxon>Lactobacillales</taxon>
        <taxon>Streptococcaceae</taxon>
        <taxon>Streptococcus</taxon>
    </lineage>
</organism>
<proteinExistence type="inferred from homology"/>
<comment type="function">
    <text evidence="1">The RuvA-RuvB-RuvC complex processes Holliday junction (HJ) DNA during genetic recombination and DNA repair, while the RuvA-RuvB complex plays an important role in the rescue of blocked DNA replication forks via replication fork reversal (RFR). RuvA specifically binds to HJ cruciform DNA, conferring on it an open structure. The RuvB hexamer acts as an ATP-dependent pump, pulling dsDNA into and through the RuvAB complex. HJ branch migration allows RuvC to scan DNA until it finds its consensus sequence, where it cleaves and resolves the cruciform DNA.</text>
</comment>
<comment type="subunit">
    <text evidence="1">Homotetramer. Forms an RuvA(8)-RuvB(12)-Holliday junction (HJ) complex. HJ DNA is sandwiched between 2 RuvA tetramers; dsDNA enters through RuvA and exits via RuvB. An RuvB hexamer assembles on each DNA strand where it exits the tetramer. Each RuvB hexamer is contacted by two RuvA subunits (via domain III) on 2 adjacent RuvB subunits; this complex drives branch migration. In the full resolvosome a probable DNA-RuvA(4)-RuvB(12)-RuvC(2) complex forms which resolves the HJ.</text>
</comment>
<comment type="subcellular location">
    <subcellularLocation>
        <location evidence="1">Cytoplasm</location>
    </subcellularLocation>
</comment>
<comment type="domain">
    <text evidence="1">Has three domains with a flexible linker between the domains II and III and assumes an 'L' shape. Domain III is highly mobile and contacts RuvB.</text>
</comment>
<comment type="similarity">
    <text evidence="1">Belongs to the RuvA family.</text>
</comment>